<organism>
    <name type="scientific">Rhizobium rhizogenes (strain K84 / ATCC BAA-868)</name>
    <name type="common">Agrobacterium radiobacter</name>
    <dbReference type="NCBI Taxonomy" id="311403"/>
    <lineage>
        <taxon>Bacteria</taxon>
        <taxon>Pseudomonadati</taxon>
        <taxon>Pseudomonadota</taxon>
        <taxon>Alphaproteobacteria</taxon>
        <taxon>Hyphomicrobiales</taxon>
        <taxon>Rhizobiaceae</taxon>
        <taxon>Rhizobium/Agrobacterium group</taxon>
        <taxon>Rhizobium</taxon>
    </lineage>
</organism>
<keyword id="KW-0687">Ribonucleoprotein</keyword>
<keyword id="KW-0689">Ribosomal protein</keyword>
<keyword id="KW-0694">RNA-binding</keyword>
<keyword id="KW-0699">rRNA-binding</keyword>
<name>RS8_RHIR8</name>
<sequence>MTMTDPLGDMLTRIRNGASRRKSSVSTPASKLRARVLDVLQAEGYIRGYSVVDFGNGKSELSIELKYYEGSSVIREIGRVSKPGRRVYVSVKSIPQVANGLGIIILSTPKGVMADHQAREQNVGGEVLCSVF</sequence>
<feature type="chain" id="PRO_1000165298" description="Small ribosomal subunit protein uS8">
    <location>
        <begin position="1"/>
        <end position="132"/>
    </location>
</feature>
<accession>B9JDU2</accession>
<protein>
    <recommendedName>
        <fullName evidence="1">Small ribosomal subunit protein uS8</fullName>
    </recommendedName>
    <alternativeName>
        <fullName evidence="2">30S ribosomal protein S8</fullName>
    </alternativeName>
</protein>
<proteinExistence type="inferred from homology"/>
<evidence type="ECO:0000255" key="1">
    <source>
        <dbReference type="HAMAP-Rule" id="MF_01302"/>
    </source>
</evidence>
<evidence type="ECO:0000305" key="2"/>
<gene>
    <name evidence="1" type="primary">rpsH</name>
    <name type="ordered locus">Arad_1991</name>
</gene>
<reference key="1">
    <citation type="journal article" date="2009" name="J. Bacteriol.">
        <title>Genome sequences of three Agrobacterium biovars help elucidate the evolution of multichromosome genomes in bacteria.</title>
        <authorList>
            <person name="Slater S.C."/>
            <person name="Goldman B.S."/>
            <person name="Goodner B."/>
            <person name="Setubal J.C."/>
            <person name="Farrand S.K."/>
            <person name="Nester E.W."/>
            <person name="Burr T.J."/>
            <person name="Banta L."/>
            <person name="Dickerman A.W."/>
            <person name="Paulsen I."/>
            <person name="Otten L."/>
            <person name="Suen G."/>
            <person name="Welch R."/>
            <person name="Almeida N.F."/>
            <person name="Arnold F."/>
            <person name="Burton O.T."/>
            <person name="Du Z."/>
            <person name="Ewing A."/>
            <person name="Godsy E."/>
            <person name="Heisel S."/>
            <person name="Houmiel K.L."/>
            <person name="Jhaveri J."/>
            <person name="Lu J."/>
            <person name="Miller N.M."/>
            <person name="Norton S."/>
            <person name="Chen Q."/>
            <person name="Phoolcharoen W."/>
            <person name="Ohlin V."/>
            <person name="Ondrusek D."/>
            <person name="Pride N."/>
            <person name="Stricklin S.L."/>
            <person name="Sun J."/>
            <person name="Wheeler C."/>
            <person name="Wilson L."/>
            <person name="Zhu H."/>
            <person name="Wood D.W."/>
        </authorList>
    </citation>
    <scope>NUCLEOTIDE SEQUENCE [LARGE SCALE GENOMIC DNA]</scope>
    <source>
        <strain>K84 / ATCC BAA-868</strain>
    </source>
</reference>
<comment type="function">
    <text evidence="1">One of the primary rRNA binding proteins, it binds directly to 16S rRNA central domain where it helps coordinate assembly of the platform of the 30S subunit.</text>
</comment>
<comment type="subunit">
    <text evidence="1">Part of the 30S ribosomal subunit. Contacts proteins S5 and S12.</text>
</comment>
<comment type="similarity">
    <text evidence="1">Belongs to the universal ribosomal protein uS8 family.</text>
</comment>
<dbReference type="EMBL" id="CP000628">
    <property type="protein sequence ID" value="ACM26293.1"/>
    <property type="molecule type" value="Genomic_DNA"/>
</dbReference>
<dbReference type="RefSeq" id="WP_007690778.1">
    <property type="nucleotide sequence ID" value="NC_011985.1"/>
</dbReference>
<dbReference type="SMR" id="B9JDU2"/>
<dbReference type="STRING" id="311403.Arad_1991"/>
<dbReference type="GeneID" id="86848181"/>
<dbReference type="KEGG" id="ara:Arad_1991"/>
<dbReference type="eggNOG" id="COG0096">
    <property type="taxonomic scope" value="Bacteria"/>
</dbReference>
<dbReference type="HOGENOM" id="CLU_098428_0_0_5"/>
<dbReference type="Proteomes" id="UP000001600">
    <property type="component" value="Chromosome 1"/>
</dbReference>
<dbReference type="GO" id="GO:1990904">
    <property type="term" value="C:ribonucleoprotein complex"/>
    <property type="evidence" value="ECO:0007669"/>
    <property type="project" value="UniProtKB-KW"/>
</dbReference>
<dbReference type="GO" id="GO:0005840">
    <property type="term" value="C:ribosome"/>
    <property type="evidence" value="ECO:0007669"/>
    <property type="project" value="UniProtKB-KW"/>
</dbReference>
<dbReference type="GO" id="GO:0019843">
    <property type="term" value="F:rRNA binding"/>
    <property type="evidence" value="ECO:0007669"/>
    <property type="project" value="UniProtKB-UniRule"/>
</dbReference>
<dbReference type="GO" id="GO:0003735">
    <property type="term" value="F:structural constituent of ribosome"/>
    <property type="evidence" value="ECO:0007669"/>
    <property type="project" value="InterPro"/>
</dbReference>
<dbReference type="GO" id="GO:0006412">
    <property type="term" value="P:translation"/>
    <property type="evidence" value="ECO:0007669"/>
    <property type="project" value="UniProtKB-UniRule"/>
</dbReference>
<dbReference type="FunFam" id="3.30.1370.30:FF:000002">
    <property type="entry name" value="30S ribosomal protein S8"/>
    <property type="match status" value="1"/>
</dbReference>
<dbReference type="FunFam" id="3.30.1490.10:FF:000001">
    <property type="entry name" value="30S ribosomal protein S8"/>
    <property type="match status" value="1"/>
</dbReference>
<dbReference type="Gene3D" id="3.30.1370.30">
    <property type="match status" value="1"/>
</dbReference>
<dbReference type="Gene3D" id="3.30.1490.10">
    <property type="match status" value="1"/>
</dbReference>
<dbReference type="HAMAP" id="MF_01302_B">
    <property type="entry name" value="Ribosomal_uS8_B"/>
    <property type="match status" value="1"/>
</dbReference>
<dbReference type="InterPro" id="IPR000630">
    <property type="entry name" value="Ribosomal_uS8"/>
</dbReference>
<dbReference type="InterPro" id="IPR047863">
    <property type="entry name" value="Ribosomal_uS8_CS"/>
</dbReference>
<dbReference type="InterPro" id="IPR035987">
    <property type="entry name" value="Ribosomal_uS8_sf"/>
</dbReference>
<dbReference type="NCBIfam" id="NF001109">
    <property type="entry name" value="PRK00136.1"/>
    <property type="match status" value="1"/>
</dbReference>
<dbReference type="PANTHER" id="PTHR11758">
    <property type="entry name" value="40S RIBOSOMAL PROTEIN S15A"/>
    <property type="match status" value="1"/>
</dbReference>
<dbReference type="Pfam" id="PF00410">
    <property type="entry name" value="Ribosomal_S8"/>
    <property type="match status" value="1"/>
</dbReference>
<dbReference type="SUPFAM" id="SSF56047">
    <property type="entry name" value="Ribosomal protein S8"/>
    <property type="match status" value="1"/>
</dbReference>
<dbReference type="PROSITE" id="PS00053">
    <property type="entry name" value="RIBOSOMAL_S8"/>
    <property type="match status" value="1"/>
</dbReference>